<keyword id="KW-0002">3D-structure</keyword>
<keyword id="KW-0025">Alternative splicing</keyword>
<keyword id="KW-0963">Cytoplasm</keyword>
<keyword id="KW-0256">Endoplasmic reticulum</keyword>
<keyword id="KW-0507">mRNA processing</keyword>
<keyword id="KW-0539">Nucleus</keyword>
<keyword id="KW-0597">Phosphoprotein</keyword>
<keyword id="KW-1267">Proteomics identification</keyword>
<keyword id="KW-1185">Reference proteome</keyword>
<keyword id="KW-0677">Repeat</keyword>
<keyword id="KW-0694">RNA-binding</keyword>
<proteinExistence type="evidence at protein level"/>
<feature type="chain" id="PRO_0000081482" description="APOBEC1 complementation factor">
    <location>
        <begin position="1"/>
        <end position="594"/>
    </location>
</feature>
<feature type="domain" description="RRM 1" evidence="2">
    <location>
        <begin position="56"/>
        <end position="134"/>
    </location>
</feature>
<feature type="domain" description="RRM 2" evidence="2">
    <location>
        <begin position="136"/>
        <end position="218"/>
    </location>
</feature>
<feature type="domain" description="RRM 3" evidence="2">
    <location>
        <begin position="231"/>
        <end position="303"/>
    </location>
</feature>
<feature type="region of interest" description="Required for nuclear localization" evidence="10">
    <location>
        <begin position="360"/>
        <end position="409"/>
    </location>
</feature>
<feature type="modified residue" description="Phosphothreonine" evidence="25">
    <location>
        <position position="499"/>
    </location>
</feature>
<feature type="splice variant" id="VSP_051925" description="In isoform 5." evidence="14">
    <location>
        <begin position="1"/>
        <end position="84"/>
    </location>
</feature>
<feature type="splice variant" id="VSP_051926" description="In isoform 3." evidence="17">
    <original>MESNHKSGDGLSGTQKEAALRALVQRTGYSLVQ</original>
    <variation>MLCSPSFCKLCWKRKK</variation>
    <location>
        <begin position="1"/>
        <end position="33"/>
    </location>
</feature>
<feature type="splice variant" id="VSP_051927" description="In isoform 4." evidence="15 16">
    <original>MESNHKSGDGLSGTQKEAALRALVQRTGYSLVQ</original>
    <variation>MEAVCLGTCPEPEASMSTAIPGLKKGNNALQSIILQTLLEK</variation>
    <location>
        <begin position="1"/>
        <end position="33"/>
    </location>
</feature>
<feature type="splice variant" id="VSP_051928" description="In isoform 6." evidence="14">
    <location>
        <begin position="202"/>
        <end position="256"/>
    </location>
</feature>
<feature type="splice variant" id="VSP_051929" description="In isoform 2, isoform 3 and isoform 4." evidence="12 13 15 16 17">
    <location>
        <begin position="381"/>
        <end position="388"/>
    </location>
</feature>
<feature type="sequence variant" id="VAR_052201" description="In dbSNP:rs9073.">
    <original>V</original>
    <variation>M</variation>
    <location>
        <position position="555"/>
    </location>
</feature>
<feature type="sequence variant" id="VAR_059821" description="In dbSNP:rs11817448.">
    <original>A</original>
    <variation>S</variation>
    <location>
        <position position="558"/>
    </location>
</feature>
<feature type="mutagenesis site" description="Greatly reduced RNA binding." evidence="8">
    <original>F</original>
    <variation>A</variation>
    <location>
        <position position="59"/>
    </location>
</feature>
<feature type="mutagenesis site" description="Greatly reduced RNA binding." evidence="8">
    <original>F</original>
    <variation>A</variation>
    <location>
        <position position="100"/>
    </location>
</feature>
<feature type="mutagenesis site" description="Greatly reduced RNA binding." evidence="8">
    <original>F</original>
    <variation>A</variation>
    <location>
        <position position="139"/>
    </location>
</feature>
<feature type="mutagenesis site" description="Greatly reduced RNA binding." evidence="8">
    <original>F</original>
    <variation>A</variation>
    <location>
        <position position="183"/>
    </location>
</feature>
<feature type="mutagenesis site" description="Slightly reduced RNA binding." evidence="8">
    <original>Y</original>
    <variation>A</variation>
    <location>
        <position position="234"/>
    </location>
</feature>
<feature type="mutagenesis site" description="Slightly reduced RNA binding." evidence="8">
    <original>F</original>
    <variation>A</variation>
    <location>
        <position position="270"/>
    </location>
</feature>
<feature type="sequence conflict" description="In Ref. 2; AAF34824." evidence="18" ref="2">
    <original>A</original>
    <variation>T</variation>
    <location>
        <position position="191"/>
    </location>
</feature>
<feature type="sequence conflict" description="In Ref. 2 and 3." evidence="18" ref="2 3">
    <original>E</original>
    <variation>K</variation>
    <location>
        <position position="277"/>
    </location>
</feature>
<feature type="strand" evidence="26">
    <location>
        <begin position="232"/>
        <end position="237"/>
    </location>
</feature>
<feature type="helix" evidence="26">
    <location>
        <begin position="244"/>
        <end position="252"/>
    </location>
</feature>
<feature type="strand" evidence="26">
    <location>
        <begin position="259"/>
        <end position="264"/>
    </location>
</feature>
<feature type="strand" evidence="26">
    <location>
        <begin position="266"/>
        <end position="275"/>
    </location>
</feature>
<feature type="helix" evidence="26">
    <location>
        <begin position="276"/>
        <end position="286"/>
    </location>
</feature>
<feature type="strand" evidence="26">
    <location>
        <begin position="287"/>
        <end position="291"/>
    </location>
</feature>
<feature type="strand" evidence="26">
    <location>
        <begin position="294"/>
        <end position="299"/>
    </location>
</feature>
<organism>
    <name type="scientific">Homo sapiens</name>
    <name type="common">Human</name>
    <dbReference type="NCBI Taxonomy" id="9606"/>
    <lineage>
        <taxon>Eukaryota</taxon>
        <taxon>Metazoa</taxon>
        <taxon>Chordata</taxon>
        <taxon>Craniata</taxon>
        <taxon>Vertebrata</taxon>
        <taxon>Euteleostomi</taxon>
        <taxon>Mammalia</taxon>
        <taxon>Eutheria</taxon>
        <taxon>Euarchontoglires</taxon>
        <taxon>Primates</taxon>
        <taxon>Haplorrhini</taxon>
        <taxon>Catarrhini</taxon>
        <taxon>Hominidae</taxon>
        <taxon>Homo</taxon>
    </lineage>
</organism>
<comment type="function">
    <text evidence="3 4 9 11">Essential component of the apolipoprotein B mRNA editing enzyme complex which is responsible for the postranscriptional editing of a CAA codon for Gln to a UAA codon for stop in APOB mRNA. Binds to APOB mRNA and is probably responsible for docking the catalytic subunit, APOBEC1, to the mRNA to allow it to deaminate its target cytosine. The complex also protects the edited APOB mRNA from nonsense-mediated decay.</text>
</comment>
<comment type="subunit">
    <text evidence="3 4 5 6 10 11">Part of the apolipoprotein B mRNA editing complex with APOBEC1 (PubMed:10669759, PubMed:10781591). Interacts with TNPO2; TNPO2 may be responsible for transport of A1CF into the nucleus (PubMed:12896982). Interacts with SYNCRIP (PubMed:11134005). Interacts with CELF2/CUGBP2 (PubMed:11577082). Interacts with RBM47 (PubMed:24916387).</text>
</comment>
<comment type="interaction">
    <interactant intactId="EBI-2809489">
        <id>Q9NQ94</id>
    </interactant>
    <interactant intactId="EBI-11976299">
        <id>Q5BKX5-3</id>
        <label>ACTMAP</label>
    </interactant>
    <organismsDiffer>false</organismsDiffer>
    <experiments>3</experiments>
</comment>
<comment type="interaction">
    <interactant intactId="EBI-2809489">
        <id>Q9NQ94</id>
    </interactant>
    <interactant intactId="EBI-3867333">
        <id>A8MQ03</id>
        <label>CYSRT1</label>
    </interactant>
    <organismsDiffer>false</organismsDiffer>
    <experiments>3</experiments>
</comment>
<comment type="interaction">
    <interactant intactId="EBI-2809489">
        <id>Q9NQ94</id>
    </interactant>
    <interactant intactId="EBI-10694655">
        <id>Q7L591-3</id>
        <label>DOK3</label>
    </interactant>
    <organismsDiffer>false</organismsDiffer>
    <experiments>3</experiments>
</comment>
<comment type="interaction">
    <interactant intactId="EBI-2809489">
        <id>Q9NQ94</id>
    </interactant>
    <interactant intactId="EBI-947964">
        <id>Q16610</id>
        <label>ECM1</label>
    </interactant>
    <organismsDiffer>false</organismsDiffer>
    <experiments>3</experiments>
</comment>
<comment type="interaction">
    <interactant intactId="EBI-2809489">
        <id>Q9NQ94</id>
    </interactant>
    <interactant intactId="EBI-12012124">
        <id>Q04637-9</id>
        <label>EIF4G1</label>
    </interactant>
    <organismsDiffer>false</organismsDiffer>
    <experiments>3</experiments>
</comment>
<comment type="interaction">
    <interactant intactId="EBI-2809489">
        <id>Q9NQ94</id>
    </interactant>
    <interactant intactId="EBI-701903">
        <id>Q14192</id>
        <label>FHL2</label>
    </interactant>
    <organismsDiffer>false</organismsDiffer>
    <experiments>3</experiments>
</comment>
<comment type="interaction">
    <interactant intactId="EBI-2809489">
        <id>Q9NQ94</id>
    </interactant>
    <interactant intactId="EBI-741101">
        <id>Q13643</id>
        <label>FHL3</label>
    </interactant>
    <organismsDiffer>false</organismsDiffer>
    <experiments>3</experiments>
</comment>
<comment type="interaction">
    <interactant intactId="EBI-2809489">
        <id>Q9NQ94</id>
    </interactant>
    <interactant intactId="EBI-739395">
        <id>Q16082</id>
        <label>HSPB2</label>
    </interactant>
    <organismsDiffer>false</organismsDiffer>
    <experiments>3</experiments>
</comment>
<comment type="interaction">
    <interactant intactId="EBI-2809489">
        <id>Q9NQ94</id>
    </interactant>
    <interactant intactId="EBI-9478422">
        <id>Q96G42</id>
        <label>KLHDC7B</label>
    </interactant>
    <organismsDiffer>false</organismsDiffer>
    <experiments>3</experiments>
</comment>
<comment type="interaction">
    <interactant intactId="EBI-2809489">
        <id>Q9NQ94</id>
    </interactant>
    <interactant intactId="EBI-948001">
        <id>Q15323</id>
        <label>KRT31</label>
    </interactant>
    <organismsDiffer>false</organismsDiffer>
    <experiments>3</experiments>
</comment>
<comment type="interaction">
    <interactant intactId="EBI-2809489">
        <id>Q9NQ94</id>
    </interactant>
    <interactant intactId="EBI-1047093">
        <id>O76011</id>
        <label>KRT34</label>
    </interactant>
    <organismsDiffer>false</organismsDiffer>
    <experiments>3</experiments>
</comment>
<comment type="interaction">
    <interactant intactId="EBI-2809489">
        <id>Q9NQ94</id>
    </interactant>
    <interactant intactId="EBI-8487781">
        <id>Q8N6F8</id>
        <label>METTL27</label>
    </interactant>
    <organismsDiffer>false</organismsDiffer>
    <experiments>3</experiments>
</comment>
<comment type="interaction">
    <interactant intactId="EBI-2809489">
        <id>Q9NQ94</id>
    </interactant>
    <interactant intactId="EBI-536879">
        <id>O43482</id>
        <label>OIP5</label>
    </interactant>
    <organismsDiffer>false</organismsDiffer>
    <experiments>3</experiments>
</comment>
<comment type="interaction">
    <interactant intactId="EBI-2809489">
        <id>Q9NQ94</id>
    </interactant>
    <interactant intactId="EBI-949255">
        <id>Q58EX7</id>
        <label>PLEKHG4</label>
    </interactant>
    <organismsDiffer>false</organismsDiffer>
    <experiments>3</experiments>
</comment>
<comment type="interaction">
    <interactant intactId="EBI-2809489">
        <id>Q9NQ94</id>
    </interactant>
    <interactant intactId="EBI-1389308">
        <id>Q7Z3K3</id>
        <label>POGZ</label>
    </interactant>
    <organismsDiffer>false</organismsDiffer>
    <experiments>3</experiments>
</comment>
<comment type="interaction">
    <interactant intactId="EBI-2809489">
        <id>Q9NQ94</id>
    </interactant>
    <interactant intactId="EBI-307352">
        <id>Q04864</id>
        <label>REL</label>
    </interactant>
    <organismsDiffer>false</organismsDiffer>
    <experiments>3</experiments>
</comment>
<comment type="interaction">
    <interactant intactId="EBI-2809489">
        <id>Q9NQ94</id>
    </interactant>
    <interactant intactId="EBI-10182375">
        <id>Q9UFD9</id>
        <label>RIMBP3</label>
    </interactant>
    <organismsDiffer>false</organismsDiffer>
    <experiments>3</experiments>
</comment>
<comment type="interaction">
    <interactant intactId="EBI-2809489">
        <id>Q9NQ94</id>
    </interactant>
    <interactant intactId="EBI-10269322">
        <id>Q8NCR6</id>
        <label>SPMIP6</label>
    </interactant>
    <organismsDiffer>false</organismsDiffer>
    <experiments>3</experiments>
</comment>
<comment type="interaction">
    <interactant intactId="EBI-2809489">
        <id>Q9NQ94</id>
    </interactant>
    <interactant intactId="EBI-359224">
        <id>Q13077</id>
        <label>TRAF1</label>
    </interactant>
    <organismsDiffer>false</organismsDiffer>
    <experiments>6</experiments>
</comment>
<comment type="interaction">
    <interactant intactId="EBI-10311892">
        <id>Q9NQ94-2</id>
    </interactant>
    <interactant intactId="EBI-742141">
        <id>O95810</id>
        <label>CAVIN2</label>
    </interactant>
    <organismsDiffer>false</organismsDiffer>
    <experiments>3</experiments>
</comment>
<comment type="subcellular location">
    <subcellularLocation>
        <location evidence="9 11">Nucleus</location>
    </subcellularLocation>
    <subcellularLocation>
        <location evidence="1">Endoplasmic reticulum</location>
    </subcellularLocation>
    <subcellularLocation>
        <location evidence="9">Cytoplasm</location>
    </subcellularLocation>
    <text evidence="1">Predominantly nuclear where it localizes to heterochromatin. Also cytoplasmic where it is found at the outer surface of the endoplasmic reticulum (By similarity). Shuttles between the nucleus and cytoplasm. May be transported into the nucleus by the nuclear import protein TNPO2/TRN2 or by APOBEC1.</text>
</comment>
<comment type="alternative products">
    <event type="alternative splicing"/>
    <isoform>
        <id>Q9NQ94-1</id>
        <name evidence="4">1</name>
        <sequence type="displayed"/>
    </isoform>
    <isoform>
        <id>Q9NQ94-2</id>
        <name evidence="3 4">2</name>
        <sequence type="described" ref="VSP_051929"/>
    </isoform>
    <isoform>
        <id>Q9NQ94-3</id>
        <name>3</name>
        <sequence type="described" ref="VSP_051926 VSP_051929"/>
    </isoform>
    <isoform>
        <id>Q9NQ94-4</id>
        <name evidence="18">4</name>
        <sequence type="described" ref="VSP_051927 VSP_051929"/>
    </isoform>
    <isoform>
        <id>Q9NQ94-5</id>
        <name evidence="7">5</name>
        <sequence type="described" ref="VSP_051925"/>
    </isoform>
    <isoform>
        <id>Q9NQ94-6</id>
        <name evidence="7">6</name>
        <sequence type="described" ref="VSP_051928"/>
    </isoform>
</comment>
<comment type="tissue specificity">
    <text evidence="3">Widely expressed with highest levels in brain, liver, pancreas, colon and spleen.</text>
</comment>
<comment type="domain">
    <text evidence="8">The RRM domains are necessary but not sufficient for binding to APOB mRNA. Additional residues in the pre-RRM and C-terminal regions are required for RNA-binding and for complementing APOBEC1 activity.</text>
</comment>
<comment type="miscellaneous">
    <molecule>Isoform 2</molecule>
    <text evidence="7">Major isoform found in 66-78% of cDNA clones.</text>
</comment>
<comment type="miscellaneous">
    <molecule>Isoform 4</molecule>
    <text evidence="7 18">Does not exhibit APOBEC1 complementation activity.</text>
</comment>
<comment type="miscellaneous">
    <molecule>Isoform 5</molecule>
    <text evidence="7">Does not exhibit APOBEC1 complementation activity.</text>
</comment>
<comment type="miscellaneous">
    <molecule>Isoform 6</molecule>
    <text evidence="7">Minor isoform found in 2-3% of cDNA clones.</text>
</comment>
<comment type="sequence caution" evidence="18">
    <conflict type="frameshift">
        <sequence resource="EMBL-CDS" id="BAA91086"/>
    </conflict>
</comment>
<accession>Q9NQ94</accession>
<accession>A1L4F2</accession>
<accession>A8K7G7</accession>
<accession>B7ZM14</accession>
<accession>Q5SZQ0</accession>
<accession>Q9NQ93</accession>
<accession>Q9NQX8</accession>
<accession>Q9NQX9</accession>
<accession>Q9NXC9</accession>
<accession>Q9NZD3</accession>
<sequence>MESNHKSGDGLSGTQKEAALRALVQRTGYSLVQENGQRKYGGPPPGWDAAPPERGCEIFIGKLPRDLFEDELIPLCEKIGKIYEMRMMMDFNGNNRGYAFVTFSNKVEAKNAIKQLNNYEIRNGRLLGVCASVDNCRLFVGGIPKTKKREEILSEMKKVTEGVVDVIVYPSAADKTKNRGFAFVEYESHRAAAMARRKLLPGRIQLWGHGIAVDWAEPEVEVDEDTMSSVKILYVRNLMLSTSEEMIEKEFNNIKPGAVERVKKIRDYAFVHFSNREDAVEAMKALNGKVLDGSPIEVTLAKPVDKDSYVRYTRGTGGRGTMLQGEYTYSLGQVYDPTTTYLGAPVFYAPQTYAAIPSLHFPATKGHLSNRAIIRAPSVREIYMNVPVGAAGVRGLGGRGYLAYTGLGRGYQVKGDKREDKLYDILPGMELTPMNPVTLKPQGIKLAPQILEEICQKNNWGQPVYQLHSAIGQDQRQLFLYKITIPALASQNPAIHPFTPPKLSAFVDEAKTYAAEYTLQTLGIPTDGGDGTMATAAAAATAFPGYAVPNATAPVSAAQLKQAVTLGQDLAAYTTYEVYPTFAVTARGDGYGTF</sequence>
<name>A1CF_HUMAN</name>
<dbReference type="EMBL" id="AJ272078">
    <property type="protein sequence ID" value="CAB94754.1"/>
    <property type="molecule type" value="mRNA"/>
</dbReference>
<dbReference type="EMBL" id="AJ272079">
    <property type="protein sequence ID" value="CAB94755.1"/>
    <property type="molecule type" value="mRNA"/>
</dbReference>
<dbReference type="EMBL" id="AF209192">
    <property type="protein sequence ID" value="AAF34824.1"/>
    <property type="molecule type" value="mRNA"/>
</dbReference>
<dbReference type="EMBL" id="AF271789">
    <property type="protein sequence ID" value="AAF76221.1"/>
    <property type="molecule type" value="mRNA"/>
</dbReference>
<dbReference type="EMBL" id="AF271790">
    <property type="protein sequence ID" value="AAF76222.1"/>
    <property type="molecule type" value="mRNA"/>
</dbReference>
<dbReference type="EMBL" id="AK000324">
    <property type="protein sequence ID" value="BAA91086.1"/>
    <property type="status" value="ALT_FRAME"/>
    <property type="molecule type" value="mRNA"/>
</dbReference>
<dbReference type="EMBL" id="AK291982">
    <property type="protein sequence ID" value="BAF84671.1"/>
    <property type="molecule type" value="mRNA"/>
</dbReference>
<dbReference type="EMBL" id="AL512366">
    <property type="status" value="NOT_ANNOTATED_CDS"/>
    <property type="molecule type" value="Genomic_DNA"/>
</dbReference>
<dbReference type="EMBL" id="AL589794">
    <property type="status" value="NOT_ANNOTATED_CDS"/>
    <property type="molecule type" value="Genomic_DNA"/>
</dbReference>
<dbReference type="EMBL" id="CH471083">
    <property type="protein sequence ID" value="EAW54133.1"/>
    <property type="molecule type" value="Genomic_DNA"/>
</dbReference>
<dbReference type="EMBL" id="CH471083">
    <property type="protein sequence ID" value="EAW54134.1"/>
    <property type="molecule type" value="Genomic_DNA"/>
</dbReference>
<dbReference type="EMBL" id="CH471083">
    <property type="protein sequence ID" value="EAW54135.1"/>
    <property type="molecule type" value="Genomic_DNA"/>
</dbReference>
<dbReference type="EMBL" id="BC130519">
    <property type="protein sequence ID" value="AAI30520.1"/>
    <property type="molecule type" value="mRNA"/>
</dbReference>
<dbReference type="EMBL" id="BC144196">
    <property type="protein sequence ID" value="AAI44197.1"/>
    <property type="molecule type" value="mRNA"/>
</dbReference>
<dbReference type="CCDS" id="CCDS7241.1">
    <molecule id="Q9NQ94-2"/>
</dbReference>
<dbReference type="CCDS" id="CCDS7242.1">
    <molecule id="Q9NQ94-1"/>
</dbReference>
<dbReference type="CCDS" id="CCDS7243.1">
    <molecule id="Q9NQ94-4"/>
</dbReference>
<dbReference type="RefSeq" id="NP_001185747.1">
    <molecule id="Q9NQ94-2"/>
    <property type="nucleotide sequence ID" value="NM_001198818.2"/>
</dbReference>
<dbReference type="RefSeq" id="NP_001185748.1">
    <property type="nucleotide sequence ID" value="NM_001198819.1"/>
</dbReference>
<dbReference type="RefSeq" id="NP_001185749.1">
    <molecule id="Q9NQ94-4"/>
    <property type="nucleotide sequence ID" value="NM_001198820.2"/>
</dbReference>
<dbReference type="RefSeq" id="NP_001357059.1">
    <molecule id="Q9NQ94-2"/>
    <property type="nucleotide sequence ID" value="NM_001370130.1"/>
</dbReference>
<dbReference type="RefSeq" id="NP_001357060.1">
    <molecule id="Q9NQ94-1"/>
    <property type="nucleotide sequence ID" value="NM_001370131.1"/>
</dbReference>
<dbReference type="RefSeq" id="NP_055391.2">
    <molecule id="Q9NQ94-2"/>
    <property type="nucleotide sequence ID" value="NM_014576.3"/>
</dbReference>
<dbReference type="RefSeq" id="NP_620310.1">
    <molecule id="Q9NQ94-1"/>
    <property type="nucleotide sequence ID" value="NM_138932.3"/>
</dbReference>
<dbReference type="RefSeq" id="NP_620311.1">
    <molecule id="Q9NQ94-4"/>
    <property type="nucleotide sequence ID" value="NM_138933.3"/>
</dbReference>
<dbReference type="RefSeq" id="XP_005269775.1">
    <molecule id="Q9NQ94-1"/>
    <property type="nucleotide sequence ID" value="XM_005269718.3"/>
</dbReference>
<dbReference type="RefSeq" id="XP_005269777.1">
    <property type="nucleotide sequence ID" value="XM_005269720.3"/>
</dbReference>
<dbReference type="RefSeq" id="XP_016871649.1">
    <property type="nucleotide sequence ID" value="XM_017016160.1"/>
</dbReference>
<dbReference type="RefSeq" id="XP_047281085.1">
    <molecule id="Q9NQ94-4"/>
    <property type="nucleotide sequence ID" value="XM_047425129.1"/>
</dbReference>
<dbReference type="RefSeq" id="XP_047281086.1">
    <molecule id="Q9NQ94-1"/>
    <property type="nucleotide sequence ID" value="XM_047425130.1"/>
</dbReference>
<dbReference type="RefSeq" id="XP_054221651.1">
    <molecule id="Q9NQ94-1"/>
    <property type="nucleotide sequence ID" value="XM_054365676.1"/>
</dbReference>
<dbReference type="RefSeq" id="XP_054221652.1">
    <molecule id="Q9NQ94-4"/>
    <property type="nucleotide sequence ID" value="XM_054365677.1"/>
</dbReference>
<dbReference type="RefSeq" id="XP_054221653.1">
    <molecule id="Q9NQ94-1"/>
    <property type="nucleotide sequence ID" value="XM_054365678.1"/>
</dbReference>
<dbReference type="PDB" id="2CPD">
    <property type="method" value="NMR"/>
    <property type="chains" value="A=223-308"/>
</dbReference>
<dbReference type="PDBsum" id="2CPD"/>
<dbReference type="SMR" id="Q9NQ94"/>
<dbReference type="BioGRID" id="119004">
    <property type="interactions" value="42"/>
</dbReference>
<dbReference type="ComplexPortal" id="CPX-1097">
    <property type="entry name" value="C-to-U editosome complex"/>
</dbReference>
<dbReference type="FunCoup" id="Q9NQ94">
    <property type="interactions" value="205"/>
</dbReference>
<dbReference type="IntAct" id="Q9NQ94">
    <property type="interactions" value="24"/>
</dbReference>
<dbReference type="STRING" id="9606.ENSP00000378868"/>
<dbReference type="GlyGen" id="Q9NQ94">
    <property type="glycosylation" value="1 site, 1 O-linked glycan (1 site)"/>
</dbReference>
<dbReference type="iPTMnet" id="Q9NQ94"/>
<dbReference type="PhosphoSitePlus" id="Q9NQ94"/>
<dbReference type="BioMuta" id="A1CF"/>
<dbReference type="DMDM" id="74761651"/>
<dbReference type="jPOST" id="Q9NQ94"/>
<dbReference type="MassIVE" id="Q9NQ94"/>
<dbReference type="PaxDb" id="9606-ENSP00000378868"/>
<dbReference type="PeptideAtlas" id="Q9NQ94"/>
<dbReference type="ProteomicsDB" id="82112">
    <molecule id="Q9NQ94-1"/>
</dbReference>
<dbReference type="ProteomicsDB" id="82113">
    <molecule id="Q9NQ94-2"/>
</dbReference>
<dbReference type="ProteomicsDB" id="82114">
    <molecule id="Q9NQ94-3"/>
</dbReference>
<dbReference type="ProteomicsDB" id="82115">
    <molecule id="Q9NQ94-4"/>
</dbReference>
<dbReference type="ProteomicsDB" id="82116">
    <molecule id="Q9NQ94-5"/>
</dbReference>
<dbReference type="ProteomicsDB" id="82117">
    <molecule id="Q9NQ94-6"/>
</dbReference>
<dbReference type="Antibodypedia" id="27897">
    <property type="antibodies" value="181 antibodies from 21 providers"/>
</dbReference>
<dbReference type="DNASU" id="29974"/>
<dbReference type="Ensembl" id="ENST00000373993.6">
    <molecule id="Q9NQ94-1"/>
    <property type="protein sequence ID" value="ENSP00000363105.1"/>
    <property type="gene ID" value="ENSG00000148584.16"/>
</dbReference>
<dbReference type="Ensembl" id="ENST00000373995.7">
    <molecule id="Q9NQ94-4"/>
    <property type="protein sequence ID" value="ENSP00000363107.3"/>
    <property type="gene ID" value="ENSG00000148584.16"/>
</dbReference>
<dbReference type="Ensembl" id="ENST00000373997.8">
    <molecule id="Q9NQ94-2"/>
    <property type="protein sequence ID" value="ENSP00000363109.3"/>
    <property type="gene ID" value="ENSG00000148584.16"/>
</dbReference>
<dbReference type="Ensembl" id="ENST00000374001.6">
    <molecule id="Q9NQ94-2"/>
    <property type="protein sequence ID" value="ENSP00000363113.1"/>
    <property type="gene ID" value="ENSG00000148584.16"/>
</dbReference>
<dbReference type="Ensembl" id="ENST00000395495.6">
    <molecule id="Q9NQ94-4"/>
    <property type="protein sequence ID" value="ENSP00000378873.2"/>
    <property type="gene ID" value="ENSG00000148584.16"/>
</dbReference>
<dbReference type="Ensembl" id="ENST00000414883.2">
    <molecule id="Q9NQ94-2"/>
    <property type="protein sequence ID" value="ENSP00000397953.2"/>
    <property type="gene ID" value="ENSG00000148584.16"/>
</dbReference>
<dbReference type="GeneID" id="29974"/>
<dbReference type="KEGG" id="hsa:29974"/>
<dbReference type="MANE-Select" id="ENST00000373997.8">
    <molecule id="Q9NQ94-2"/>
    <property type="protein sequence ID" value="ENSP00000363109.3"/>
    <property type="RefSeq nucleotide sequence ID" value="NM_014576.4"/>
    <property type="RefSeq protein sequence ID" value="NP_055391.2"/>
</dbReference>
<dbReference type="UCSC" id="uc001jjh.4">
    <molecule id="Q9NQ94-1"/>
    <property type="organism name" value="human"/>
</dbReference>
<dbReference type="AGR" id="HGNC:24086"/>
<dbReference type="CTD" id="29974"/>
<dbReference type="DisGeNET" id="29974"/>
<dbReference type="GeneCards" id="A1CF"/>
<dbReference type="HGNC" id="HGNC:24086">
    <property type="gene designation" value="A1CF"/>
</dbReference>
<dbReference type="HPA" id="ENSG00000148584">
    <property type="expression patterns" value="Tissue enriched (liver)"/>
</dbReference>
<dbReference type="MIM" id="618199">
    <property type="type" value="gene"/>
</dbReference>
<dbReference type="neXtProt" id="NX_Q9NQ94"/>
<dbReference type="OpenTargets" id="ENSG00000148584"/>
<dbReference type="PharmGKB" id="PA162375098"/>
<dbReference type="VEuPathDB" id="HostDB:ENSG00000148584"/>
<dbReference type="eggNOG" id="KOG0117">
    <property type="taxonomic scope" value="Eukaryota"/>
</dbReference>
<dbReference type="GeneTree" id="ENSGT00940000158678"/>
<dbReference type="HOGENOM" id="CLU_022960_5_1_1"/>
<dbReference type="InParanoid" id="Q9NQ94"/>
<dbReference type="OrthoDB" id="3800936at2759"/>
<dbReference type="PAN-GO" id="Q9NQ94">
    <property type="GO annotations" value="2 GO annotations based on evolutionary models"/>
</dbReference>
<dbReference type="PhylomeDB" id="Q9NQ94"/>
<dbReference type="TreeFam" id="TF314932"/>
<dbReference type="PathwayCommons" id="Q9NQ94"/>
<dbReference type="Reactome" id="R-HSA-72200">
    <property type="pathway name" value="mRNA Editing: C to U Conversion"/>
</dbReference>
<dbReference type="Reactome" id="R-HSA-75094">
    <property type="pathway name" value="Formation of the Editosome"/>
</dbReference>
<dbReference type="SignaLink" id="Q9NQ94"/>
<dbReference type="BioGRID-ORCS" id="29974">
    <property type="hits" value="28 hits in 1151 CRISPR screens"/>
</dbReference>
<dbReference type="ChiTaRS" id="A1CF">
    <property type="organism name" value="human"/>
</dbReference>
<dbReference type="EvolutionaryTrace" id="Q9NQ94"/>
<dbReference type="GeneWiki" id="ACF_(gene)"/>
<dbReference type="GenomeRNAi" id="29974"/>
<dbReference type="Pharos" id="Q9NQ94">
    <property type="development level" value="Tbio"/>
</dbReference>
<dbReference type="PRO" id="PR:Q9NQ94"/>
<dbReference type="Proteomes" id="UP000005640">
    <property type="component" value="Chromosome 10"/>
</dbReference>
<dbReference type="RNAct" id="Q9NQ94">
    <property type="molecule type" value="protein"/>
</dbReference>
<dbReference type="Bgee" id="ENSG00000148584">
    <property type="expression patterns" value="Expressed in liver and 64 other cell types or tissues"/>
</dbReference>
<dbReference type="ExpressionAtlas" id="Q9NQ94">
    <property type="expression patterns" value="baseline and differential"/>
</dbReference>
<dbReference type="GO" id="GO:0030895">
    <property type="term" value="C:apolipoprotein B mRNA editing enzyme complex"/>
    <property type="evidence" value="ECO:0000314"/>
    <property type="project" value="UniProtKB"/>
</dbReference>
<dbReference type="GO" id="GO:0005737">
    <property type="term" value="C:cytoplasm"/>
    <property type="evidence" value="ECO:0000314"/>
    <property type="project" value="UniProtKB"/>
</dbReference>
<dbReference type="GO" id="GO:0005783">
    <property type="term" value="C:endoplasmic reticulum"/>
    <property type="evidence" value="ECO:0007669"/>
    <property type="project" value="UniProtKB-SubCell"/>
</dbReference>
<dbReference type="GO" id="GO:0045293">
    <property type="term" value="C:mRNA editing complex"/>
    <property type="evidence" value="ECO:0000303"/>
    <property type="project" value="ComplexPortal"/>
</dbReference>
<dbReference type="GO" id="GO:0005654">
    <property type="term" value="C:nucleoplasm"/>
    <property type="evidence" value="ECO:0000314"/>
    <property type="project" value="HPA"/>
</dbReference>
<dbReference type="GO" id="GO:0005634">
    <property type="term" value="C:nucleus"/>
    <property type="evidence" value="ECO:0000314"/>
    <property type="project" value="UniProtKB"/>
</dbReference>
<dbReference type="GO" id="GO:0140767">
    <property type="term" value="F:enzyme-substrate adaptor activity"/>
    <property type="evidence" value="ECO:0000314"/>
    <property type="project" value="UniProt"/>
</dbReference>
<dbReference type="GO" id="GO:0003729">
    <property type="term" value="F:mRNA binding"/>
    <property type="evidence" value="ECO:0000318"/>
    <property type="project" value="GO_Central"/>
</dbReference>
<dbReference type="GO" id="GO:0003723">
    <property type="term" value="F:RNA binding"/>
    <property type="evidence" value="ECO:0000304"/>
    <property type="project" value="ProtInc"/>
</dbReference>
<dbReference type="GO" id="GO:0003727">
    <property type="term" value="F:single-stranded RNA binding"/>
    <property type="evidence" value="ECO:0000314"/>
    <property type="project" value="UniProtKB"/>
</dbReference>
<dbReference type="GO" id="GO:0141166">
    <property type="term" value="P:chromosomal 5-methylcytosine DNA demethylation pathway"/>
    <property type="evidence" value="ECO:0000303"/>
    <property type="project" value="ComplexPortal"/>
</dbReference>
<dbReference type="GO" id="GO:0016554">
    <property type="term" value="P:cytidine to uridine editing"/>
    <property type="evidence" value="ECO:0000314"/>
    <property type="project" value="UniProtKB"/>
</dbReference>
<dbReference type="GO" id="GO:0007566">
    <property type="term" value="P:embryo implantation"/>
    <property type="evidence" value="ECO:0007669"/>
    <property type="project" value="Ensembl"/>
</dbReference>
<dbReference type="GO" id="GO:0010609">
    <property type="term" value="P:mRNA localization resulting in post-transcriptional regulation of gene expression"/>
    <property type="evidence" value="ECO:0007669"/>
    <property type="project" value="Ensembl"/>
</dbReference>
<dbReference type="GO" id="GO:0016556">
    <property type="term" value="P:mRNA modification"/>
    <property type="evidence" value="ECO:0000314"/>
    <property type="project" value="ComplexPortal"/>
</dbReference>
<dbReference type="GO" id="GO:0006397">
    <property type="term" value="P:mRNA processing"/>
    <property type="evidence" value="ECO:0007669"/>
    <property type="project" value="UniProtKB-KW"/>
</dbReference>
<dbReference type="GO" id="GO:2000623">
    <property type="term" value="P:negative regulation of nuclear-transcribed mRNA catabolic process, nonsense-mediated decay"/>
    <property type="evidence" value="ECO:0000314"/>
    <property type="project" value="ComplexPortal"/>
</dbReference>
<dbReference type="GO" id="GO:0050821">
    <property type="term" value="P:protein stabilization"/>
    <property type="evidence" value="ECO:0000314"/>
    <property type="project" value="UniProtKB"/>
</dbReference>
<dbReference type="CDD" id="cd19900">
    <property type="entry name" value="DSRM_A1CF"/>
    <property type="match status" value="1"/>
</dbReference>
<dbReference type="CDD" id="cd12486">
    <property type="entry name" value="RRM1_ACF"/>
    <property type="match status" value="1"/>
</dbReference>
<dbReference type="CDD" id="cd12490">
    <property type="entry name" value="RRM2_ACF"/>
    <property type="match status" value="1"/>
</dbReference>
<dbReference type="CDD" id="cd12498">
    <property type="entry name" value="RRM3_ACF"/>
    <property type="match status" value="1"/>
</dbReference>
<dbReference type="FunFam" id="3.30.160.20:FF:000025">
    <property type="entry name" value="APOBEC1 complementation factor isoform X1"/>
    <property type="match status" value="1"/>
</dbReference>
<dbReference type="FunFam" id="3.30.70.330:FF:000022">
    <property type="entry name" value="APOBEC1 complementation factor isoform X1"/>
    <property type="match status" value="1"/>
</dbReference>
<dbReference type="FunFam" id="3.30.70.330:FF:000026">
    <property type="entry name" value="APOBEC1 complementation factor isoform X1"/>
    <property type="match status" value="1"/>
</dbReference>
<dbReference type="FunFam" id="3.30.70.330:FF:000179">
    <property type="entry name" value="APOBEC1 complementation factor isoform X1"/>
    <property type="match status" value="1"/>
</dbReference>
<dbReference type="Gene3D" id="3.30.160.20">
    <property type="match status" value="1"/>
</dbReference>
<dbReference type="Gene3D" id="3.30.70.330">
    <property type="match status" value="3"/>
</dbReference>
<dbReference type="InterPro" id="IPR044461">
    <property type="entry name" value="A1CF_DSRM"/>
</dbReference>
<dbReference type="InterPro" id="IPR034538">
    <property type="entry name" value="ACF_RRM1"/>
</dbReference>
<dbReference type="InterPro" id="IPR006535">
    <property type="entry name" value="HnRNP_R/Q_splicing_fac"/>
</dbReference>
<dbReference type="InterPro" id="IPR012677">
    <property type="entry name" value="Nucleotide-bd_a/b_plait_sf"/>
</dbReference>
<dbReference type="InterPro" id="IPR035979">
    <property type="entry name" value="RBD_domain_sf"/>
</dbReference>
<dbReference type="InterPro" id="IPR000504">
    <property type="entry name" value="RRM_dom"/>
</dbReference>
<dbReference type="NCBIfam" id="TIGR01648">
    <property type="entry name" value="hnRNP-R-Q"/>
    <property type="match status" value="1"/>
</dbReference>
<dbReference type="PANTHER" id="PTHR21245">
    <property type="entry name" value="HETEROGENEOUS NUCLEAR RIBONUCLEOPROTEIN"/>
    <property type="match status" value="1"/>
</dbReference>
<dbReference type="Pfam" id="PF14709">
    <property type="entry name" value="DND1_DSRM"/>
    <property type="match status" value="1"/>
</dbReference>
<dbReference type="Pfam" id="PF00076">
    <property type="entry name" value="RRM_1"/>
    <property type="match status" value="3"/>
</dbReference>
<dbReference type="SMART" id="SM00360">
    <property type="entry name" value="RRM"/>
    <property type="match status" value="3"/>
</dbReference>
<dbReference type="SUPFAM" id="SSF54768">
    <property type="entry name" value="dsRNA-binding domain-like"/>
    <property type="match status" value="1"/>
</dbReference>
<dbReference type="SUPFAM" id="SSF54928">
    <property type="entry name" value="RNA-binding domain, RBD"/>
    <property type="match status" value="3"/>
</dbReference>
<dbReference type="PROSITE" id="PS50102">
    <property type="entry name" value="RRM"/>
    <property type="match status" value="3"/>
</dbReference>
<gene>
    <name type="primary">A1CF</name>
    <name type="synonym">ACF</name>
    <name evidence="23" type="synonym">ASP</name>
</gene>
<evidence type="ECO:0000250" key="1"/>
<evidence type="ECO:0000255" key="2">
    <source>
        <dbReference type="PROSITE-ProRule" id="PRU00176"/>
    </source>
</evidence>
<evidence type="ECO:0000269" key="3">
    <source>
    </source>
</evidence>
<evidence type="ECO:0000269" key="4">
    <source>
    </source>
</evidence>
<evidence type="ECO:0000269" key="5">
    <source>
    </source>
</evidence>
<evidence type="ECO:0000269" key="6">
    <source>
    </source>
</evidence>
<evidence type="ECO:0000269" key="7">
    <source>
    </source>
</evidence>
<evidence type="ECO:0000269" key="8">
    <source>
    </source>
</evidence>
<evidence type="ECO:0000269" key="9">
    <source>
    </source>
</evidence>
<evidence type="ECO:0000269" key="10">
    <source>
    </source>
</evidence>
<evidence type="ECO:0000269" key="11">
    <source>
    </source>
</evidence>
<evidence type="ECO:0000303" key="12">
    <source>
    </source>
</evidence>
<evidence type="ECO:0000303" key="13">
    <source>
    </source>
</evidence>
<evidence type="ECO:0000303" key="14">
    <source>
    </source>
</evidence>
<evidence type="ECO:0000303" key="15">
    <source>
    </source>
</evidence>
<evidence type="ECO:0000303" key="16">
    <source>
    </source>
</evidence>
<evidence type="ECO:0000303" key="17">
    <source ref="3"/>
</evidence>
<evidence type="ECO:0000305" key="18"/>
<evidence type="ECO:0000312" key="19">
    <source>
        <dbReference type="EMBL" id="AAF34824.1"/>
    </source>
</evidence>
<evidence type="ECO:0000312" key="20">
    <source>
        <dbReference type="EMBL" id="AAF76221.1"/>
    </source>
</evidence>
<evidence type="ECO:0000312" key="21">
    <source>
        <dbReference type="EMBL" id="AL512366"/>
    </source>
</evidence>
<evidence type="ECO:0000312" key="22">
    <source>
        <dbReference type="EMBL" id="BAA91086.1"/>
    </source>
</evidence>
<evidence type="ECO:0000312" key="23">
    <source>
        <dbReference type="EMBL" id="CAB94754.1"/>
    </source>
</evidence>
<evidence type="ECO:0000312" key="24">
    <source>
        <dbReference type="EMBL" id="CAB94755.1"/>
    </source>
</evidence>
<evidence type="ECO:0007744" key="25">
    <source>
    </source>
</evidence>
<evidence type="ECO:0007829" key="26">
    <source>
        <dbReference type="PDB" id="2CPD"/>
    </source>
</evidence>
<reference evidence="18 23" key="1">
    <citation type="journal article" date="2000" name="J. Biol. Chem.">
        <title>Purification and molecular cloning of a novel essential component of the apolipoprotein B mRNA editing enzyme-complex.</title>
        <authorList>
            <person name="Lellek H."/>
            <person name="Kirsten R."/>
            <person name="Diehl I."/>
            <person name="Apostel F."/>
            <person name="Buck F."/>
            <person name="Greeve J."/>
        </authorList>
    </citation>
    <scope>NUCLEOTIDE SEQUENCE [MRNA] (ISOFORMS 1 AND 2)</scope>
    <scope>FUNCTION</scope>
    <scope>INTERACTION WITH APOBEC1</scope>
    <source>
        <tissue evidence="23">Liver</tissue>
        <tissue evidence="24">Small intestine</tissue>
    </source>
</reference>
<reference evidence="18 19" key="2">
    <citation type="journal article" date="2000" name="Mol. Cell. Biol.">
        <title>Molecular cloning of APOBEC-1 complementation factor, a novel RNA-binding protein involved in the editing of apolipoprotein B mRNA.</title>
        <authorList>
            <person name="Mehta A."/>
            <person name="Kinter M.T."/>
            <person name="Sherman N.E."/>
            <person name="Driscoll D.M."/>
        </authorList>
    </citation>
    <scope>NUCLEOTIDE SEQUENCE [MRNA] (ISOFORM 2)</scope>
    <scope>FUNCTION</scope>
    <scope>INTERACTION WITH APOBEC1</scope>
    <scope>TISSUE SPECIFICITY</scope>
</reference>
<reference evidence="18 20" key="3">
    <citation type="submission" date="2000-05" db="EMBL/GenBank/DDBJ databases">
        <title>Human APOBEC-1 complementation factor related protein.</title>
        <authorList>
            <person name="Sowden M.P."/>
            <person name="Smith H.C."/>
        </authorList>
    </citation>
    <scope>NUCLEOTIDE SEQUENCE [MRNA] (ISOFORMS 2 AND 3)</scope>
    <source>
        <tissue>Liver</tissue>
    </source>
</reference>
<reference evidence="18 22" key="4">
    <citation type="journal article" date="2004" name="Nat. Genet.">
        <title>Complete sequencing and characterization of 21,243 full-length human cDNAs.</title>
        <authorList>
            <person name="Ota T."/>
            <person name="Suzuki Y."/>
            <person name="Nishikawa T."/>
            <person name="Otsuki T."/>
            <person name="Sugiyama T."/>
            <person name="Irie R."/>
            <person name="Wakamatsu A."/>
            <person name="Hayashi K."/>
            <person name="Sato H."/>
            <person name="Nagai K."/>
            <person name="Kimura K."/>
            <person name="Makita H."/>
            <person name="Sekine M."/>
            <person name="Obayashi M."/>
            <person name="Nishi T."/>
            <person name="Shibahara T."/>
            <person name="Tanaka T."/>
            <person name="Ishii S."/>
            <person name="Yamamoto J."/>
            <person name="Saito K."/>
            <person name="Kawai Y."/>
            <person name="Isono Y."/>
            <person name="Nakamura Y."/>
            <person name="Nagahari K."/>
            <person name="Murakami K."/>
            <person name="Yasuda T."/>
            <person name="Iwayanagi T."/>
            <person name="Wagatsuma M."/>
            <person name="Shiratori A."/>
            <person name="Sudo H."/>
            <person name="Hosoiri T."/>
            <person name="Kaku Y."/>
            <person name="Kodaira H."/>
            <person name="Kondo H."/>
            <person name="Sugawara M."/>
            <person name="Takahashi M."/>
            <person name="Kanda K."/>
            <person name="Yokoi T."/>
            <person name="Furuya T."/>
            <person name="Kikkawa E."/>
            <person name="Omura Y."/>
            <person name="Abe K."/>
            <person name="Kamihara K."/>
            <person name="Katsuta N."/>
            <person name="Sato K."/>
            <person name="Tanikawa M."/>
            <person name="Yamazaki M."/>
            <person name="Ninomiya K."/>
            <person name="Ishibashi T."/>
            <person name="Yamashita H."/>
            <person name="Murakawa K."/>
            <person name="Fujimori K."/>
            <person name="Tanai H."/>
            <person name="Kimata M."/>
            <person name="Watanabe M."/>
            <person name="Hiraoka S."/>
            <person name="Chiba Y."/>
            <person name="Ishida S."/>
            <person name="Ono Y."/>
            <person name="Takiguchi S."/>
            <person name="Watanabe S."/>
            <person name="Yosida M."/>
            <person name="Hotuta T."/>
            <person name="Kusano J."/>
            <person name="Kanehori K."/>
            <person name="Takahashi-Fujii A."/>
            <person name="Hara H."/>
            <person name="Tanase T.-O."/>
            <person name="Nomura Y."/>
            <person name="Togiya S."/>
            <person name="Komai F."/>
            <person name="Hara R."/>
            <person name="Takeuchi K."/>
            <person name="Arita M."/>
            <person name="Imose N."/>
            <person name="Musashino K."/>
            <person name="Yuuki H."/>
            <person name="Oshima A."/>
            <person name="Sasaki N."/>
            <person name="Aotsuka S."/>
            <person name="Yoshikawa Y."/>
            <person name="Matsunawa H."/>
            <person name="Ichihara T."/>
            <person name="Shiohata N."/>
            <person name="Sano S."/>
            <person name="Moriya S."/>
            <person name="Momiyama H."/>
            <person name="Satoh N."/>
            <person name="Takami S."/>
            <person name="Terashima Y."/>
            <person name="Suzuki O."/>
            <person name="Nakagawa S."/>
            <person name="Senoh A."/>
            <person name="Mizoguchi H."/>
            <person name="Goto Y."/>
            <person name="Shimizu F."/>
            <person name="Wakebe H."/>
            <person name="Hishigaki H."/>
            <person name="Watanabe T."/>
            <person name="Sugiyama A."/>
            <person name="Takemoto M."/>
            <person name="Kawakami B."/>
            <person name="Yamazaki M."/>
            <person name="Watanabe K."/>
            <person name="Kumagai A."/>
            <person name="Itakura S."/>
            <person name="Fukuzumi Y."/>
            <person name="Fujimori Y."/>
            <person name="Komiyama M."/>
            <person name="Tashiro H."/>
            <person name="Tanigami A."/>
            <person name="Fujiwara T."/>
            <person name="Ono T."/>
            <person name="Yamada K."/>
            <person name="Fujii Y."/>
            <person name="Ozaki K."/>
            <person name="Hirao M."/>
            <person name="Ohmori Y."/>
            <person name="Kawabata A."/>
            <person name="Hikiji T."/>
            <person name="Kobatake N."/>
            <person name="Inagaki H."/>
            <person name="Ikema Y."/>
            <person name="Okamoto S."/>
            <person name="Okitani R."/>
            <person name="Kawakami T."/>
            <person name="Noguchi S."/>
            <person name="Itoh T."/>
            <person name="Shigeta K."/>
            <person name="Senba T."/>
            <person name="Matsumura K."/>
            <person name="Nakajima Y."/>
            <person name="Mizuno T."/>
            <person name="Morinaga M."/>
            <person name="Sasaki M."/>
            <person name="Togashi T."/>
            <person name="Oyama M."/>
            <person name="Hata H."/>
            <person name="Watanabe M."/>
            <person name="Komatsu T."/>
            <person name="Mizushima-Sugano J."/>
            <person name="Satoh T."/>
            <person name="Shirai Y."/>
            <person name="Takahashi Y."/>
            <person name="Nakagawa K."/>
            <person name="Okumura K."/>
            <person name="Nagase T."/>
            <person name="Nomura N."/>
            <person name="Kikuchi H."/>
            <person name="Masuho Y."/>
            <person name="Yamashita R."/>
            <person name="Nakai K."/>
            <person name="Yada T."/>
            <person name="Nakamura Y."/>
            <person name="Ohara O."/>
            <person name="Isogai T."/>
            <person name="Sugano S."/>
        </authorList>
    </citation>
    <scope>NUCLEOTIDE SEQUENCE [LARGE SCALE MRNA] (ISOFORMS 2 AND 4)</scope>
    <source>
        <tissue>Small intestine</tissue>
    </source>
</reference>
<reference evidence="21" key="5">
    <citation type="journal article" date="2004" name="Nature">
        <title>The DNA sequence and comparative analysis of human chromosome 10.</title>
        <authorList>
            <person name="Deloukas P."/>
            <person name="Earthrowl M.E."/>
            <person name="Grafham D.V."/>
            <person name="Rubenfield M."/>
            <person name="French L."/>
            <person name="Steward C.A."/>
            <person name="Sims S.K."/>
            <person name="Jones M.C."/>
            <person name="Searle S."/>
            <person name="Scott C."/>
            <person name="Howe K."/>
            <person name="Hunt S.E."/>
            <person name="Andrews T.D."/>
            <person name="Gilbert J.G.R."/>
            <person name="Swarbreck D."/>
            <person name="Ashurst J.L."/>
            <person name="Taylor A."/>
            <person name="Battles J."/>
            <person name="Bird C.P."/>
            <person name="Ainscough R."/>
            <person name="Almeida J.P."/>
            <person name="Ashwell R.I.S."/>
            <person name="Ambrose K.D."/>
            <person name="Babbage A.K."/>
            <person name="Bagguley C.L."/>
            <person name="Bailey J."/>
            <person name="Banerjee R."/>
            <person name="Bates K."/>
            <person name="Beasley H."/>
            <person name="Bray-Allen S."/>
            <person name="Brown A.J."/>
            <person name="Brown J.Y."/>
            <person name="Burford D.C."/>
            <person name="Burrill W."/>
            <person name="Burton J."/>
            <person name="Cahill P."/>
            <person name="Camire D."/>
            <person name="Carter N.P."/>
            <person name="Chapman J.C."/>
            <person name="Clark S.Y."/>
            <person name="Clarke G."/>
            <person name="Clee C.M."/>
            <person name="Clegg S."/>
            <person name="Corby N."/>
            <person name="Coulson A."/>
            <person name="Dhami P."/>
            <person name="Dutta I."/>
            <person name="Dunn M."/>
            <person name="Faulkner L."/>
            <person name="Frankish A."/>
            <person name="Frankland J.A."/>
            <person name="Garner P."/>
            <person name="Garnett J."/>
            <person name="Gribble S."/>
            <person name="Griffiths C."/>
            <person name="Grocock R."/>
            <person name="Gustafson E."/>
            <person name="Hammond S."/>
            <person name="Harley J.L."/>
            <person name="Hart E."/>
            <person name="Heath P.D."/>
            <person name="Ho T.P."/>
            <person name="Hopkins B."/>
            <person name="Horne J."/>
            <person name="Howden P.J."/>
            <person name="Huckle E."/>
            <person name="Hynds C."/>
            <person name="Johnson C."/>
            <person name="Johnson D."/>
            <person name="Kana A."/>
            <person name="Kay M."/>
            <person name="Kimberley A.M."/>
            <person name="Kershaw J.K."/>
            <person name="Kokkinaki M."/>
            <person name="Laird G.K."/>
            <person name="Lawlor S."/>
            <person name="Lee H.M."/>
            <person name="Leongamornlert D.A."/>
            <person name="Laird G."/>
            <person name="Lloyd C."/>
            <person name="Lloyd D.M."/>
            <person name="Loveland J."/>
            <person name="Lovell J."/>
            <person name="McLaren S."/>
            <person name="McLay K.E."/>
            <person name="McMurray A."/>
            <person name="Mashreghi-Mohammadi M."/>
            <person name="Matthews L."/>
            <person name="Milne S."/>
            <person name="Nickerson T."/>
            <person name="Nguyen M."/>
            <person name="Overton-Larty E."/>
            <person name="Palmer S.A."/>
            <person name="Pearce A.V."/>
            <person name="Peck A.I."/>
            <person name="Pelan S."/>
            <person name="Phillimore B."/>
            <person name="Porter K."/>
            <person name="Rice C.M."/>
            <person name="Rogosin A."/>
            <person name="Ross M.T."/>
            <person name="Sarafidou T."/>
            <person name="Sehra H.K."/>
            <person name="Shownkeen R."/>
            <person name="Skuce C.D."/>
            <person name="Smith M."/>
            <person name="Standring L."/>
            <person name="Sycamore N."/>
            <person name="Tester J."/>
            <person name="Thorpe A."/>
            <person name="Torcasso W."/>
            <person name="Tracey A."/>
            <person name="Tromans A."/>
            <person name="Tsolas J."/>
            <person name="Wall M."/>
            <person name="Walsh J."/>
            <person name="Wang H."/>
            <person name="Weinstock K."/>
            <person name="West A.P."/>
            <person name="Willey D.L."/>
            <person name="Whitehead S.L."/>
            <person name="Wilming L."/>
            <person name="Wray P.W."/>
            <person name="Young L."/>
            <person name="Chen Y."/>
            <person name="Lovering R.C."/>
            <person name="Moschonas N.K."/>
            <person name="Siebert R."/>
            <person name="Fechtel K."/>
            <person name="Bentley D."/>
            <person name="Durbin R.M."/>
            <person name="Hubbard T."/>
            <person name="Doucette-Stamm L."/>
            <person name="Beck S."/>
            <person name="Smith D.R."/>
            <person name="Rogers J."/>
        </authorList>
    </citation>
    <scope>NUCLEOTIDE SEQUENCE [LARGE SCALE GENOMIC DNA]</scope>
</reference>
<reference evidence="18 20" key="6">
    <citation type="submission" date="2005-07" db="EMBL/GenBank/DDBJ databases">
        <authorList>
            <person name="Mural R.J."/>
            <person name="Istrail S."/>
            <person name="Sutton G.G."/>
            <person name="Florea L."/>
            <person name="Halpern A.L."/>
            <person name="Mobarry C.M."/>
            <person name="Lippert R."/>
            <person name="Walenz B."/>
            <person name="Shatkay H."/>
            <person name="Dew I."/>
            <person name="Miller J.R."/>
            <person name="Flanigan M.J."/>
            <person name="Edwards N.J."/>
            <person name="Bolanos R."/>
            <person name="Fasulo D."/>
            <person name="Halldorsson B.V."/>
            <person name="Hannenhalli S."/>
            <person name="Turner R."/>
            <person name="Yooseph S."/>
            <person name="Lu F."/>
            <person name="Nusskern D.R."/>
            <person name="Shue B.C."/>
            <person name="Zheng X.H."/>
            <person name="Zhong F."/>
            <person name="Delcher A.L."/>
            <person name="Huson D.H."/>
            <person name="Kravitz S.A."/>
            <person name="Mouchard L."/>
            <person name="Reinert K."/>
            <person name="Remington K.A."/>
            <person name="Clark A.G."/>
            <person name="Waterman M.S."/>
            <person name="Eichler E.E."/>
            <person name="Adams M.D."/>
            <person name="Hunkapiller M.W."/>
            <person name="Myers E.W."/>
            <person name="Venter J.C."/>
        </authorList>
    </citation>
    <scope>NUCLEOTIDE SEQUENCE [LARGE SCALE GENOMIC DNA]</scope>
</reference>
<reference key="7">
    <citation type="journal article" date="2004" name="Genome Res.">
        <title>The status, quality, and expansion of the NIH full-length cDNA project: the Mammalian Gene Collection (MGC).</title>
        <authorList>
            <consortium name="The MGC Project Team"/>
        </authorList>
    </citation>
    <scope>NUCLEOTIDE SEQUENCE [LARGE SCALE MRNA] (ISOFORMS 1 AND 4)</scope>
</reference>
<reference key="8">
    <citation type="journal article" date="2001" name="J. Biol. Chem.">
        <title>Identification of GRY-RBP as an apolipoprotein B RNA-binding protein that interacts with both apobec-1 and apobec-1 complementation factor to modulate C to U editing.</title>
        <authorList>
            <person name="Blanc V."/>
            <person name="Navaratnam N."/>
            <person name="Henderson J.O."/>
            <person name="Anant S."/>
            <person name="Kennedy S."/>
            <person name="Jarmuz A."/>
            <person name="Scott J."/>
            <person name="Davidson N.O."/>
        </authorList>
    </citation>
    <scope>INTERACTION WITH SYNCRIP</scope>
</reference>
<reference key="9">
    <citation type="journal article" date="2001" name="J. Biol. Chem.">
        <title>Novel role for RNA-binding protein CUGBP2 in mammalian RNA editing. CUGBP2 modulates C to U editing of apolipoprotein B mRNA by interacting with apobec-1 and ACF, the apobec-1 complementation factor.</title>
        <authorList>
            <person name="Anant S."/>
            <person name="Henderson J.O."/>
            <person name="Mukhopadhyay D."/>
            <person name="Navaratnam N."/>
            <person name="Kennedy S."/>
            <person name="Min J."/>
            <person name="Davidson N.O."/>
        </authorList>
    </citation>
    <scope>INTERACTION WITH CELF2</scope>
</reference>
<reference evidence="18" key="10">
    <citation type="journal article" date="2001" name="Biochim. Biophys. Acta">
        <title>Isolation, characterization and developmental regulation of the human apobec-1 complementation factor (ACF) gene.</title>
        <authorList>
            <person name="Henderson J.O."/>
            <person name="Blanc V."/>
            <person name="Davidson N.O."/>
        </authorList>
    </citation>
    <scope>GENE STRUCTURE</scope>
    <scope>ALTERNATIVE SPLICING</scope>
</reference>
<reference evidence="18" key="11">
    <citation type="journal article" date="2002" name="RNA">
        <title>Identification of domains in apobec-1 complementation factor required for RNA binding and apolipoprotein-B mRNA editing.</title>
        <authorList>
            <person name="Mehta A."/>
            <person name="Driscoll D.M."/>
        </authorList>
    </citation>
    <scope>RNA-BINDING DOMAIN</scope>
    <scope>MUTAGENESIS OF PHE-59; PHE-100; PHE-139; PHE-183; TYR-234 AND PHE-270</scope>
</reference>
<reference evidence="18" key="12">
    <citation type="journal article" date="2003" name="EMBO J.">
        <title>The apolipoprotein B mRNA editing complex performs a multifunctional cycle and suppresses nonsense-mediated decay.</title>
        <authorList>
            <person name="Chester A."/>
            <person name="Somasekaram A."/>
            <person name="Tzimina M."/>
            <person name="Jarmuz A."/>
            <person name="Gisbourne J."/>
            <person name="O'Keefe R."/>
            <person name="Scott J."/>
            <person name="Navaratnam N."/>
        </authorList>
    </citation>
    <scope>FUNCTION</scope>
    <scope>SUBCELLULAR LOCATION</scope>
</reference>
<reference evidence="18" key="13">
    <citation type="journal article" date="2003" name="J. Biol. Chem.">
        <title>A novel nuclear localization signal in the auxiliary domain of apobec-1 complementation factor regulates nucleocytoplasmic import and shuttling.</title>
        <authorList>
            <person name="Blanc V."/>
            <person name="Kennedy S."/>
            <person name="Davidson N.O."/>
        </authorList>
    </citation>
    <scope>NUCLEAR LOCALIZATION SIGNAL</scope>
    <scope>INTERACTION WITH TNPO2</scope>
</reference>
<reference key="14">
    <citation type="journal article" date="2014" name="EMBO Rep.">
        <title>C to U RNA editing mediated by APOBEC1 requires RNA-binding protein RBM47.</title>
        <authorList>
            <person name="Fossat N."/>
            <person name="Tourle K."/>
            <person name="Radziewic T."/>
            <person name="Barratt K."/>
            <person name="Liebhold D."/>
            <person name="Studdert J.B."/>
            <person name="Power M."/>
            <person name="Jones V."/>
            <person name="Loebel D.A."/>
            <person name="Tam P.P."/>
        </authorList>
    </citation>
    <scope>FUNCTION</scope>
    <scope>INTERACTION WITH RBM47</scope>
    <scope>SUBCELLULAR LOCATION</scope>
</reference>
<reference key="15">
    <citation type="journal article" date="2014" name="J. Proteomics">
        <title>An enzyme assisted RP-RPLC approach for in-depth analysis of human liver phosphoproteome.</title>
        <authorList>
            <person name="Bian Y."/>
            <person name="Song C."/>
            <person name="Cheng K."/>
            <person name="Dong M."/>
            <person name="Wang F."/>
            <person name="Huang J."/>
            <person name="Sun D."/>
            <person name="Wang L."/>
            <person name="Ye M."/>
            <person name="Zou H."/>
        </authorList>
    </citation>
    <scope>PHOSPHORYLATION [LARGE SCALE ANALYSIS] AT THR-499</scope>
    <scope>IDENTIFICATION BY MASS SPECTROMETRY [LARGE SCALE ANALYSIS]</scope>
    <source>
        <tissue>Liver</tissue>
    </source>
</reference>
<reference evidence="18 20" key="16">
    <citation type="submission" date="2005-11" db="PDB data bank">
        <title>Solution structure of the RNA recognition motif of human APOBEC-1 complementation factor, ACF.</title>
        <authorList>
            <consortium name="RIKEN structural genomics initiative (RSGI)"/>
        </authorList>
    </citation>
    <scope>STRUCTURE BY NMR OF 223-308</scope>
</reference>
<protein>
    <recommendedName>
        <fullName>APOBEC1 complementation factor</fullName>
    </recommendedName>
    <alternativeName>
        <fullName>APOBEC1-stimulating protein</fullName>
    </alternativeName>
</protein>